<accession>Q82FD5</accession>
<proteinExistence type="inferred from homology"/>
<organism>
    <name type="scientific">Streptomyces avermitilis (strain ATCC 31267 / DSM 46492 / JCM 5070 / NBRC 14893 / NCIMB 12804 / NRRL 8165 / MA-4680)</name>
    <dbReference type="NCBI Taxonomy" id="227882"/>
    <lineage>
        <taxon>Bacteria</taxon>
        <taxon>Bacillati</taxon>
        <taxon>Actinomycetota</taxon>
        <taxon>Actinomycetes</taxon>
        <taxon>Kitasatosporales</taxon>
        <taxon>Streptomycetaceae</taxon>
        <taxon>Streptomyces</taxon>
    </lineage>
</organism>
<evidence type="ECO:0000255" key="1">
    <source>
        <dbReference type="HAMAP-Rule" id="MF_00365"/>
    </source>
</evidence>
<name>RECF_STRAW</name>
<sequence length="373" mass="40900">MHVTHLSLADFRSYARVEVPLDPGVTAFVGPNGQGKTNLVEAVGYLATLGSHRVSSDAPLVRMGAERAIIRAQVRQDERRQLVELELNPGKANRARINRSSQVRPRDVLGIVRTVLFAPEDLALIKGDPGERRRFLDELITARSPRMAGVRSDYERVLKQRNTLLKTAALARRHGGRSMDLSTLDVWDQHLARAGAELLAQRLDLIAALQPLADKAYEQLAPGGGPIALEYKPSAPGEAHTRDALYEQLMAALAEARKQEIERGVTLVGPQRDELLLKLGQLPAKGYASHGESWSYALALRLASYDLLRAEGNEPVLVLDDVFAELDTRRRERLAELVAPGEQVLVTAAVDDDVPGVLAGTRYTVSEGTVERV</sequence>
<dbReference type="EMBL" id="BA000030">
    <property type="protein sequence ID" value="BAC72031.1"/>
    <property type="molecule type" value="Genomic_DNA"/>
</dbReference>
<dbReference type="RefSeq" id="WP_010985744.1">
    <property type="nucleotide sequence ID" value="NZ_JZJK01000079.1"/>
</dbReference>
<dbReference type="SMR" id="Q82FD5"/>
<dbReference type="GeneID" id="41541399"/>
<dbReference type="KEGG" id="sma:SAVERM_4319"/>
<dbReference type="eggNOG" id="COG1195">
    <property type="taxonomic scope" value="Bacteria"/>
</dbReference>
<dbReference type="HOGENOM" id="CLU_040267_1_1_11"/>
<dbReference type="OrthoDB" id="9803889at2"/>
<dbReference type="Proteomes" id="UP000000428">
    <property type="component" value="Chromosome"/>
</dbReference>
<dbReference type="GO" id="GO:0005737">
    <property type="term" value="C:cytoplasm"/>
    <property type="evidence" value="ECO:0007669"/>
    <property type="project" value="UniProtKB-SubCell"/>
</dbReference>
<dbReference type="GO" id="GO:0005524">
    <property type="term" value="F:ATP binding"/>
    <property type="evidence" value="ECO:0007669"/>
    <property type="project" value="UniProtKB-UniRule"/>
</dbReference>
<dbReference type="GO" id="GO:0003697">
    <property type="term" value="F:single-stranded DNA binding"/>
    <property type="evidence" value="ECO:0007669"/>
    <property type="project" value="UniProtKB-UniRule"/>
</dbReference>
<dbReference type="GO" id="GO:0006260">
    <property type="term" value="P:DNA replication"/>
    <property type="evidence" value="ECO:0007669"/>
    <property type="project" value="UniProtKB-UniRule"/>
</dbReference>
<dbReference type="GO" id="GO:0000731">
    <property type="term" value="P:DNA synthesis involved in DNA repair"/>
    <property type="evidence" value="ECO:0007669"/>
    <property type="project" value="TreeGrafter"/>
</dbReference>
<dbReference type="GO" id="GO:0006302">
    <property type="term" value="P:double-strand break repair"/>
    <property type="evidence" value="ECO:0007669"/>
    <property type="project" value="TreeGrafter"/>
</dbReference>
<dbReference type="GO" id="GO:0009432">
    <property type="term" value="P:SOS response"/>
    <property type="evidence" value="ECO:0007669"/>
    <property type="project" value="UniProtKB-UniRule"/>
</dbReference>
<dbReference type="CDD" id="cd03242">
    <property type="entry name" value="ABC_RecF"/>
    <property type="match status" value="1"/>
</dbReference>
<dbReference type="FunFam" id="1.20.1050.90:FF:000004">
    <property type="entry name" value="DNA replication and repair protein RecF"/>
    <property type="match status" value="1"/>
</dbReference>
<dbReference type="FunFam" id="3.40.50.300:FF:000730">
    <property type="entry name" value="DNA replication and repair protein RecF"/>
    <property type="match status" value="1"/>
</dbReference>
<dbReference type="Gene3D" id="3.40.50.300">
    <property type="entry name" value="P-loop containing nucleotide triphosphate hydrolases"/>
    <property type="match status" value="1"/>
</dbReference>
<dbReference type="Gene3D" id="1.20.1050.90">
    <property type="entry name" value="RecF/RecN/SMC, N-terminal domain"/>
    <property type="match status" value="1"/>
</dbReference>
<dbReference type="HAMAP" id="MF_00365">
    <property type="entry name" value="RecF"/>
    <property type="match status" value="1"/>
</dbReference>
<dbReference type="InterPro" id="IPR001238">
    <property type="entry name" value="DNA-binding_RecF"/>
</dbReference>
<dbReference type="InterPro" id="IPR018078">
    <property type="entry name" value="DNA-binding_RecF_CS"/>
</dbReference>
<dbReference type="InterPro" id="IPR027417">
    <property type="entry name" value="P-loop_NTPase"/>
</dbReference>
<dbReference type="InterPro" id="IPR003395">
    <property type="entry name" value="RecF/RecN/SMC_N"/>
</dbReference>
<dbReference type="InterPro" id="IPR042174">
    <property type="entry name" value="RecF_2"/>
</dbReference>
<dbReference type="NCBIfam" id="TIGR00611">
    <property type="entry name" value="recf"/>
    <property type="match status" value="1"/>
</dbReference>
<dbReference type="PANTHER" id="PTHR32182">
    <property type="entry name" value="DNA REPLICATION AND REPAIR PROTEIN RECF"/>
    <property type="match status" value="1"/>
</dbReference>
<dbReference type="PANTHER" id="PTHR32182:SF0">
    <property type="entry name" value="DNA REPLICATION AND REPAIR PROTEIN RECF"/>
    <property type="match status" value="1"/>
</dbReference>
<dbReference type="Pfam" id="PF02463">
    <property type="entry name" value="SMC_N"/>
    <property type="match status" value="1"/>
</dbReference>
<dbReference type="SUPFAM" id="SSF52540">
    <property type="entry name" value="P-loop containing nucleoside triphosphate hydrolases"/>
    <property type="match status" value="1"/>
</dbReference>
<dbReference type="PROSITE" id="PS00617">
    <property type="entry name" value="RECF_1"/>
    <property type="match status" value="1"/>
</dbReference>
<dbReference type="PROSITE" id="PS00618">
    <property type="entry name" value="RECF_2"/>
    <property type="match status" value="1"/>
</dbReference>
<feature type="chain" id="PRO_0000196469" description="DNA replication and repair protein RecF">
    <location>
        <begin position="1"/>
        <end position="373"/>
    </location>
</feature>
<feature type="binding site" evidence="1">
    <location>
        <begin position="30"/>
        <end position="37"/>
    </location>
    <ligand>
        <name>ATP</name>
        <dbReference type="ChEBI" id="CHEBI:30616"/>
    </ligand>
</feature>
<keyword id="KW-0067">ATP-binding</keyword>
<keyword id="KW-0963">Cytoplasm</keyword>
<keyword id="KW-0227">DNA damage</keyword>
<keyword id="KW-0234">DNA repair</keyword>
<keyword id="KW-0235">DNA replication</keyword>
<keyword id="KW-0238">DNA-binding</keyword>
<keyword id="KW-0547">Nucleotide-binding</keyword>
<keyword id="KW-1185">Reference proteome</keyword>
<keyword id="KW-0742">SOS response</keyword>
<gene>
    <name evidence="1" type="primary">recF</name>
    <name type="ordered locus">SAV_4319</name>
</gene>
<comment type="function">
    <text evidence="1">The RecF protein is involved in DNA metabolism; it is required for DNA replication and normal SOS inducibility. RecF binds preferentially to single-stranded, linear DNA. It also seems to bind ATP.</text>
</comment>
<comment type="subcellular location">
    <subcellularLocation>
        <location evidence="1">Cytoplasm</location>
    </subcellularLocation>
</comment>
<comment type="similarity">
    <text evidence="1">Belongs to the RecF family.</text>
</comment>
<protein>
    <recommendedName>
        <fullName evidence="1">DNA replication and repair protein RecF</fullName>
    </recommendedName>
</protein>
<reference key="1">
    <citation type="journal article" date="2001" name="Proc. Natl. Acad. Sci. U.S.A.">
        <title>Genome sequence of an industrial microorganism Streptomyces avermitilis: deducing the ability of producing secondary metabolites.</title>
        <authorList>
            <person name="Omura S."/>
            <person name="Ikeda H."/>
            <person name="Ishikawa J."/>
            <person name="Hanamoto A."/>
            <person name="Takahashi C."/>
            <person name="Shinose M."/>
            <person name="Takahashi Y."/>
            <person name="Horikawa H."/>
            <person name="Nakazawa H."/>
            <person name="Osonoe T."/>
            <person name="Kikuchi H."/>
            <person name="Shiba T."/>
            <person name="Sakaki Y."/>
            <person name="Hattori M."/>
        </authorList>
    </citation>
    <scope>NUCLEOTIDE SEQUENCE [LARGE SCALE GENOMIC DNA]</scope>
    <source>
        <strain>ATCC 31267 / DSM 46492 / JCM 5070 / NBRC 14893 / NCIMB 12804 / NRRL 8165 / MA-4680</strain>
    </source>
</reference>
<reference key="2">
    <citation type="journal article" date="2003" name="Nat. Biotechnol.">
        <title>Complete genome sequence and comparative analysis of the industrial microorganism Streptomyces avermitilis.</title>
        <authorList>
            <person name="Ikeda H."/>
            <person name="Ishikawa J."/>
            <person name="Hanamoto A."/>
            <person name="Shinose M."/>
            <person name="Kikuchi H."/>
            <person name="Shiba T."/>
            <person name="Sakaki Y."/>
            <person name="Hattori M."/>
            <person name="Omura S."/>
        </authorList>
    </citation>
    <scope>NUCLEOTIDE SEQUENCE [LARGE SCALE GENOMIC DNA]</scope>
    <source>
        <strain>ATCC 31267 / DSM 46492 / JCM 5070 / NBRC 14893 / NCIMB 12804 / NRRL 8165 / MA-4680</strain>
    </source>
</reference>